<accession>Q12N10</accession>
<sequence>MIEADRLIQPQVLAQDEHIDRAMRPKLLDDYTGQDDTRAQLKIFIQAAINRKEALDHMLIFGPPGLGKTTLAMIVANEMGVNIKSTSGPVLEKAGDLAALLTNLDEGDVLFIDEIHRLSPVVEEILYPAMEDYQLDIMIGEGPAARSIKLDLPPFTLIGATTRAGALTSPLRARFGIPLRLEFYNVKDLCTIVTRSAKVMELAIDAGGAHEIAKRSRGTPRIANRLLRRVRDYAEVKFAGEVTEDVAQQALDMLDVDQEGFDYLDRKLLLSIIDKFMGGPVGLDNLAAAIGEDRETIEDVLEPFLIQQGFIQRTPRGRIVTPRAYQHFNIITPDVPK</sequence>
<proteinExistence type="inferred from homology"/>
<organism>
    <name type="scientific">Shewanella denitrificans (strain OS217 / ATCC BAA-1090 / DSM 15013)</name>
    <dbReference type="NCBI Taxonomy" id="318161"/>
    <lineage>
        <taxon>Bacteria</taxon>
        <taxon>Pseudomonadati</taxon>
        <taxon>Pseudomonadota</taxon>
        <taxon>Gammaproteobacteria</taxon>
        <taxon>Alteromonadales</taxon>
        <taxon>Shewanellaceae</taxon>
        <taxon>Shewanella</taxon>
    </lineage>
</organism>
<reference key="1">
    <citation type="submission" date="2006-03" db="EMBL/GenBank/DDBJ databases">
        <title>Complete sequence of Shewanella denitrificans OS217.</title>
        <authorList>
            <consortium name="US DOE Joint Genome Institute"/>
            <person name="Copeland A."/>
            <person name="Lucas S."/>
            <person name="Lapidus A."/>
            <person name="Barry K."/>
            <person name="Detter J.C."/>
            <person name="Glavina del Rio T."/>
            <person name="Hammon N."/>
            <person name="Israni S."/>
            <person name="Dalin E."/>
            <person name="Tice H."/>
            <person name="Pitluck S."/>
            <person name="Brettin T."/>
            <person name="Bruce D."/>
            <person name="Han C."/>
            <person name="Tapia R."/>
            <person name="Gilna P."/>
            <person name="Kiss H."/>
            <person name="Schmutz J."/>
            <person name="Larimer F."/>
            <person name="Land M."/>
            <person name="Hauser L."/>
            <person name="Kyrpides N."/>
            <person name="Lykidis A."/>
            <person name="Richardson P."/>
        </authorList>
    </citation>
    <scope>NUCLEOTIDE SEQUENCE [LARGE SCALE GENOMIC DNA]</scope>
    <source>
        <strain>OS217 / ATCC BAA-1090 / DSM 15013</strain>
    </source>
</reference>
<dbReference type="EC" id="3.6.4.-" evidence="1"/>
<dbReference type="EMBL" id="CP000302">
    <property type="protein sequence ID" value="ABE55166.1"/>
    <property type="molecule type" value="Genomic_DNA"/>
</dbReference>
<dbReference type="RefSeq" id="WP_011496322.1">
    <property type="nucleotide sequence ID" value="NC_007954.1"/>
</dbReference>
<dbReference type="SMR" id="Q12N10"/>
<dbReference type="STRING" id="318161.Sden_1883"/>
<dbReference type="KEGG" id="sdn:Sden_1883"/>
<dbReference type="eggNOG" id="COG2255">
    <property type="taxonomic scope" value="Bacteria"/>
</dbReference>
<dbReference type="HOGENOM" id="CLU_055599_1_0_6"/>
<dbReference type="OrthoDB" id="9804478at2"/>
<dbReference type="Proteomes" id="UP000001982">
    <property type="component" value="Chromosome"/>
</dbReference>
<dbReference type="GO" id="GO:0005737">
    <property type="term" value="C:cytoplasm"/>
    <property type="evidence" value="ECO:0007669"/>
    <property type="project" value="UniProtKB-SubCell"/>
</dbReference>
<dbReference type="GO" id="GO:0048476">
    <property type="term" value="C:Holliday junction resolvase complex"/>
    <property type="evidence" value="ECO:0007669"/>
    <property type="project" value="UniProtKB-UniRule"/>
</dbReference>
<dbReference type="GO" id="GO:0005524">
    <property type="term" value="F:ATP binding"/>
    <property type="evidence" value="ECO:0007669"/>
    <property type="project" value="UniProtKB-UniRule"/>
</dbReference>
<dbReference type="GO" id="GO:0016887">
    <property type="term" value="F:ATP hydrolysis activity"/>
    <property type="evidence" value="ECO:0007669"/>
    <property type="project" value="InterPro"/>
</dbReference>
<dbReference type="GO" id="GO:0000400">
    <property type="term" value="F:four-way junction DNA binding"/>
    <property type="evidence" value="ECO:0007669"/>
    <property type="project" value="UniProtKB-UniRule"/>
</dbReference>
<dbReference type="GO" id="GO:0009378">
    <property type="term" value="F:four-way junction helicase activity"/>
    <property type="evidence" value="ECO:0007669"/>
    <property type="project" value="InterPro"/>
</dbReference>
<dbReference type="GO" id="GO:0006310">
    <property type="term" value="P:DNA recombination"/>
    <property type="evidence" value="ECO:0007669"/>
    <property type="project" value="UniProtKB-UniRule"/>
</dbReference>
<dbReference type="GO" id="GO:0006281">
    <property type="term" value="P:DNA repair"/>
    <property type="evidence" value="ECO:0007669"/>
    <property type="project" value="UniProtKB-UniRule"/>
</dbReference>
<dbReference type="CDD" id="cd00009">
    <property type="entry name" value="AAA"/>
    <property type="match status" value="1"/>
</dbReference>
<dbReference type="FunFam" id="1.10.10.10:FF:000086">
    <property type="entry name" value="Holliday junction ATP-dependent DNA helicase RuvB"/>
    <property type="match status" value="1"/>
</dbReference>
<dbReference type="FunFam" id="1.10.8.60:FF:000023">
    <property type="entry name" value="Holliday junction ATP-dependent DNA helicase RuvB"/>
    <property type="match status" value="1"/>
</dbReference>
<dbReference type="FunFam" id="3.40.50.300:FF:000073">
    <property type="entry name" value="Holliday junction ATP-dependent DNA helicase RuvB"/>
    <property type="match status" value="1"/>
</dbReference>
<dbReference type="Gene3D" id="1.10.8.60">
    <property type="match status" value="1"/>
</dbReference>
<dbReference type="Gene3D" id="3.40.50.300">
    <property type="entry name" value="P-loop containing nucleotide triphosphate hydrolases"/>
    <property type="match status" value="1"/>
</dbReference>
<dbReference type="Gene3D" id="1.10.10.10">
    <property type="entry name" value="Winged helix-like DNA-binding domain superfamily/Winged helix DNA-binding domain"/>
    <property type="match status" value="1"/>
</dbReference>
<dbReference type="HAMAP" id="MF_00016">
    <property type="entry name" value="DNA_HJ_migration_RuvB"/>
    <property type="match status" value="1"/>
</dbReference>
<dbReference type="InterPro" id="IPR003593">
    <property type="entry name" value="AAA+_ATPase"/>
</dbReference>
<dbReference type="InterPro" id="IPR041445">
    <property type="entry name" value="AAA_lid_4"/>
</dbReference>
<dbReference type="InterPro" id="IPR004605">
    <property type="entry name" value="DNA_helicase_Holl-junc_RuvB"/>
</dbReference>
<dbReference type="InterPro" id="IPR027417">
    <property type="entry name" value="P-loop_NTPase"/>
</dbReference>
<dbReference type="InterPro" id="IPR008824">
    <property type="entry name" value="RuvB-like_N"/>
</dbReference>
<dbReference type="InterPro" id="IPR008823">
    <property type="entry name" value="RuvB_C"/>
</dbReference>
<dbReference type="InterPro" id="IPR036388">
    <property type="entry name" value="WH-like_DNA-bd_sf"/>
</dbReference>
<dbReference type="InterPro" id="IPR036390">
    <property type="entry name" value="WH_DNA-bd_sf"/>
</dbReference>
<dbReference type="NCBIfam" id="NF000868">
    <property type="entry name" value="PRK00080.1"/>
    <property type="match status" value="1"/>
</dbReference>
<dbReference type="NCBIfam" id="TIGR00635">
    <property type="entry name" value="ruvB"/>
    <property type="match status" value="1"/>
</dbReference>
<dbReference type="PANTHER" id="PTHR42848">
    <property type="match status" value="1"/>
</dbReference>
<dbReference type="PANTHER" id="PTHR42848:SF1">
    <property type="entry name" value="HOLLIDAY JUNCTION BRANCH MIGRATION COMPLEX SUBUNIT RUVB"/>
    <property type="match status" value="1"/>
</dbReference>
<dbReference type="Pfam" id="PF17864">
    <property type="entry name" value="AAA_lid_4"/>
    <property type="match status" value="1"/>
</dbReference>
<dbReference type="Pfam" id="PF05491">
    <property type="entry name" value="RuvB_C"/>
    <property type="match status" value="1"/>
</dbReference>
<dbReference type="Pfam" id="PF05496">
    <property type="entry name" value="RuvB_N"/>
    <property type="match status" value="1"/>
</dbReference>
<dbReference type="SMART" id="SM00382">
    <property type="entry name" value="AAA"/>
    <property type="match status" value="1"/>
</dbReference>
<dbReference type="SUPFAM" id="SSF52540">
    <property type="entry name" value="P-loop containing nucleoside triphosphate hydrolases"/>
    <property type="match status" value="1"/>
</dbReference>
<dbReference type="SUPFAM" id="SSF46785">
    <property type="entry name" value="Winged helix' DNA-binding domain"/>
    <property type="match status" value="1"/>
</dbReference>
<name>RUVB_SHEDO</name>
<feature type="chain" id="PRO_1000001472" description="Holliday junction branch migration complex subunit RuvB">
    <location>
        <begin position="1"/>
        <end position="337"/>
    </location>
</feature>
<feature type="region of interest" description="Large ATPase domain (RuvB-L)" evidence="1">
    <location>
        <begin position="4"/>
        <end position="184"/>
    </location>
</feature>
<feature type="region of interest" description="Small ATPAse domain (RuvB-S)" evidence="1">
    <location>
        <begin position="185"/>
        <end position="255"/>
    </location>
</feature>
<feature type="region of interest" description="Head domain (RuvB-H)" evidence="1">
    <location>
        <begin position="258"/>
        <end position="337"/>
    </location>
</feature>
<feature type="binding site" evidence="1">
    <location>
        <position position="24"/>
    </location>
    <ligand>
        <name>ATP</name>
        <dbReference type="ChEBI" id="CHEBI:30616"/>
    </ligand>
</feature>
<feature type="binding site" evidence="1">
    <location>
        <position position="65"/>
    </location>
    <ligand>
        <name>ATP</name>
        <dbReference type="ChEBI" id="CHEBI:30616"/>
    </ligand>
</feature>
<feature type="binding site" evidence="1">
    <location>
        <position position="68"/>
    </location>
    <ligand>
        <name>ATP</name>
        <dbReference type="ChEBI" id="CHEBI:30616"/>
    </ligand>
</feature>
<feature type="binding site" evidence="1">
    <location>
        <position position="69"/>
    </location>
    <ligand>
        <name>ATP</name>
        <dbReference type="ChEBI" id="CHEBI:30616"/>
    </ligand>
</feature>
<feature type="binding site" evidence="1">
    <location>
        <position position="69"/>
    </location>
    <ligand>
        <name>Mg(2+)</name>
        <dbReference type="ChEBI" id="CHEBI:18420"/>
    </ligand>
</feature>
<feature type="binding site" evidence="1">
    <location>
        <position position="70"/>
    </location>
    <ligand>
        <name>ATP</name>
        <dbReference type="ChEBI" id="CHEBI:30616"/>
    </ligand>
</feature>
<feature type="binding site" evidence="1">
    <location>
        <begin position="131"/>
        <end position="133"/>
    </location>
    <ligand>
        <name>ATP</name>
        <dbReference type="ChEBI" id="CHEBI:30616"/>
    </ligand>
</feature>
<feature type="binding site" evidence="1">
    <location>
        <position position="174"/>
    </location>
    <ligand>
        <name>ATP</name>
        <dbReference type="ChEBI" id="CHEBI:30616"/>
    </ligand>
</feature>
<feature type="binding site" evidence="1">
    <location>
        <position position="184"/>
    </location>
    <ligand>
        <name>ATP</name>
        <dbReference type="ChEBI" id="CHEBI:30616"/>
    </ligand>
</feature>
<feature type="binding site" evidence="1">
    <location>
        <position position="221"/>
    </location>
    <ligand>
        <name>ATP</name>
        <dbReference type="ChEBI" id="CHEBI:30616"/>
    </ligand>
</feature>
<feature type="binding site" evidence="1">
    <location>
        <position position="294"/>
    </location>
    <ligand>
        <name>DNA</name>
        <dbReference type="ChEBI" id="CHEBI:16991"/>
    </ligand>
</feature>
<feature type="binding site" evidence="1">
    <location>
        <position position="313"/>
    </location>
    <ligand>
        <name>DNA</name>
        <dbReference type="ChEBI" id="CHEBI:16991"/>
    </ligand>
</feature>
<feature type="binding site" evidence="1">
    <location>
        <position position="318"/>
    </location>
    <ligand>
        <name>DNA</name>
        <dbReference type="ChEBI" id="CHEBI:16991"/>
    </ligand>
</feature>
<comment type="function">
    <text evidence="1">The RuvA-RuvB-RuvC complex processes Holliday junction (HJ) DNA during genetic recombination and DNA repair, while the RuvA-RuvB complex plays an important role in the rescue of blocked DNA replication forks via replication fork reversal (RFR). RuvA specifically binds to HJ cruciform DNA, conferring on it an open structure. The RuvB hexamer acts as an ATP-dependent pump, pulling dsDNA into and through the RuvAB complex. RuvB forms 2 homohexamers on either side of HJ DNA bound by 1 or 2 RuvA tetramers; 4 subunits per hexamer contact DNA at a time. Coordinated motions by a converter formed by DNA-disengaged RuvB subunits stimulates ATP hydrolysis and nucleotide exchange. Immobilization of the converter enables RuvB to convert the ATP-contained energy into a lever motion, pulling 2 nucleotides of DNA out of the RuvA tetramer per ATP hydrolyzed, thus driving DNA branch migration. The RuvB motors rotate together with the DNA substrate, which together with the progressing nucleotide cycle form the mechanistic basis for DNA recombination by continuous HJ branch migration. Branch migration allows RuvC to scan DNA until it finds its consensus sequence, where it cleaves and resolves cruciform DNA.</text>
</comment>
<comment type="catalytic activity">
    <reaction evidence="1">
        <text>ATP + H2O = ADP + phosphate + H(+)</text>
        <dbReference type="Rhea" id="RHEA:13065"/>
        <dbReference type="ChEBI" id="CHEBI:15377"/>
        <dbReference type="ChEBI" id="CHEBI:15378"/>
        <dbReference type="ChEBI" id="CHEBI:30616"/>
        <dbReference type="ChEBI" id="CHEBI:43474"/>
        <dbReference type="ChEBI" id="CHEBI:456216"/>
    </reaction>
</comment>
<comment type="subunit">
    <text evidence="1">Homohexamer. Forms an RuvA(8)-RuvB(12)-Holliday junction (HJ) complex. HJ DNA is sandwiched between 2 RuvA tetramers; dsDNA enters through RuvA and exits via RuvB. An RuvB hexamer assembles on each DNA strand where it exits the tetramer. Each RuvB hexamer is contacted by two RuvA subunits (via domain III) on 2 adjacent RuvB subunits; this complex drives branch migration. In the full resolvosome a probable DNA-RuvA(4)-RuvB(12)-RuvC(2) complex forms which resolves the HJ.</text>
</comment>
<comment type="subcellular location">
    <subcellularLocation>
        <location evidence="1">Cytoplasm</location>
    </subcellularLocation>
</comment>
<comment type="domain">
    <text evidence="1">Has 3 domains, the large (RuvB-L) and small ATPase (RuvB-S) domains and the C-terminal head (RuvB-H) domain. The head domain binds DNA, while the ATPase domains jointly bind ATP, ADP or are empty depending on the state of the subunit in the translocation cycle. During a single DNA translocation step the structure of each domain remains the same, but their relative positions change.</text>
</comment>
<comment type="similarity">
    <text evidence="1">Belongs to the RuvB family.</text>
</comment>
<protein>
    <recommendedName>
        <fullName evidence="1">Holliday junction branch migration complex subunit RuvB</fullName>
        <ecNumber evidence="1">3.6.4.-</ecNumber>
    </recommendedName>
</protein>
<evidence type="ECO:0000255" key="1">
    <source>
        <dbReference type="HAMAP-Rule" id="MF_00016"/>
    </source>
</evidence>
<gene>
    <name evidence="1" type="primary">ruvB</name>
    <name type="ordered locus">Sden_1883</name>
</gene>
<keyword id="KW-0067">ATP-binding</keyword>
<keyword id="KW-0963">Cytoplasm</keyword>
<keyword id="KW-0227">DNA damage</keyword>
<keyword id="KW-0233">DNA recombination</keyword>
<keyword id="KW-0234">DNA repair</keyword>
<keyword id="KW-0238">DNA-binding</keyword>
<keyword id="KW-0378">Hydrolase</keyword>
<keyword id="KW-0547">Nucleotide-binding</keyword>
<keyword id="KW-1185">Reference proteome</keyword>